<comment type="function">
    <text evidence="9 10 11 12">Extracellular matrix protein that plays significant roles in the vascular system and is required for the maintenance and stability of blood vessel (PubMed:28435016). Affects several essential steps in angiogenesis including endothelial cell proliferation, migration, and tube formation. Positively regulates angiogenesis by acting as a ligand for CD93 receptor (PubMed:28671670, PubMed:28912033).</text>
</comment>
<comment type="subunit">
    <text evidence="5 9 11 12">Heteromer of p110, p125, p140 and p200 subunits; disulfide-linked. Interacts with VEGFA. Interacts with CD93; this interaction promotes angiogenesis (PubMed:28671670, PubMed:28912033). Interacts with CD248 (PubMed:28671670).</text>
</comment>
<comment type="interaction">
    <interactant intactId="EBI-2623273">
        <id>Q9H8L6</id>
    </interactant>
    <interactant intactId="EBI-17589229">
        <id>Q6NTF9-3</id>
        <label>RHBDD2</label>
    </interactant>
    <organismsDiffer>false</organismsDiffer>
    <experiments>3</experiments>
</comment>
<comment type="subcellular location">
    <subcellularLocation>
        <location evidence="5">Secreted</location>
        <location evidence="5">Extracellular space</location>
        <location evidence="5">Extracellular matrix</location>
    </subcellularLocation>
</comment>
<comment type="tissue specificity">
    <text evidence="5">Endothelium.</text>
</comment>
<comment type="PTM">
    <text evidence="7">N- and O-glycosylated.</text>
</comment>
<comment type="PTM">
    <text evidence="13">O-fucosylated within the EMI domain (at Ser-63, Thr-67 and Thr-115) by FUT10/POFUT3 and FUT11/POFUT4.</text>
</comment>
<comment type="PTM">
    <text evidence="10">Processed by matrix metalloproteinases (MMPs) including MMP9 and, to a lesser degree, by MMP2 upon angiogenic stimulation.</text>
</comment>
<feature type="signal peptide" evidence="1">
    <location>
        <begin position="1"/>
        <end position="22"/>
    </location>
</feature>
<feature type="chain" id="PRO_0000007822" description="Multimerin-2">
    <location>
        <begin position="23"/>
        <end position="949"/>
    </location>
</feature>
<feature type="domain" description="EMI" evidence="3">
    <location>
        <begin position="54"/>
        <end position="132"/>
    </location>
</feature>
<feature type="domain" description="C1q" evidence="2">
    <location>
        <begin position="821"/>
        <end position="949"/>
    </location>
</feature>
<feature type="region of interest" description="Disordered" evidence="4">
    <location>
        <begin position="133"/>
        <end position="157"/>
    </location>
</feature>
<feature type="region of interest" description="Disordered" evidence="4">
    <location>
        <begin position="779"/>
        <end position="801"/>
    </location>
</feature>
<feature type="coiled-coil region" evidence="1">
    <location>
        <begin position="167"/>
        <end position="187"/>
    </location>
</feature>
<feature type="coiled-coil region" evidence="1">
    <location>
        <begin position="292"/>
        <end position="487"/>
    </location>
</feature>
<feature type="coiled-coil region" evidence="1">
    <location>
        <begin position="547"/>
        <end position="596"/>
    </location>
</feature>
<feature type="coiled-coil region" evidence="1">
    <location>
        <begin position="688"/>
        <end position="711"/>
    </location>
</feature>
<feature type="compositionally biased region" description="Basic and acidic residues" evidence="4">
    <location>
        <begin position="784"/>
        <end position="800"/>
    </location>
</feature>
<feature type="glycosylation site" description="O-linked (Fuc...) serine" evidence="13">
    <location>
        <position position="63"/>
    </location>
</feature>
<feature type="glycosylation site" description="O-linked (Fuc) threonine" evidence="13">
    <location>
        <position position="67"/>
    </location>
</feature>
<feature type="glycosylation site" description="O-linked (Fuc) threonine" evidence="13">
    <location>
        <position position="115"/>
    </location>
</feature>
<feature type="glycosylation site" description="N-linked (GlcNAc...) asparagine" evidence="1">
    <location>
        <position position="205"/>
    </location>
</feature>
<feature type="glycosylation site" description="N-linked (GlcNAc...) asparagine" evidence="1">
    <location>
        <position position="214"/>
    </location>
</feature>
<feature type="glycosylation site" description="N-linked (GlcNAc...) asparagine" evidence="1">
    <location>
        <position position="249"/>
    </location>
</feature>
<feature type="glycosylation site" description="N-linked (GlcNAc...) asparagine" evidence="1">
    <location>
        <position position="261"/>
    </location>
</feature>
<feature type="glycosylation site" description="N-linked (GlcNAc...) asparagine" evidence="1">
    <location>
        <position position="350"/>
    </location>
</feature>
<feature type="glycosylation site" description="N-linked (GlcNAc...) asparagine" evidence="1">
    <location>
        <position position="379"/>
    </location>
</feature>
<feature type="glycosylation site" description="N-linked (GlcNAc...) asparagine" evidence="1">
    <location>
        <position position="439"/>
    </location>
</feature>
<feature type="glycosylation site" description="N-linked (GlcNAc...) asparagine" evidence="1">
    <location>
        <position position="472"/>
    </location>
</feature>
<feature type="glycosylation site" description="N-linked (GlcNAc...) asparagine" evidence="1">
    <location>
        <position position="727"/>
    </location>
</feature>
<feature type="glycosylation site" description="N-linked (GlcNAc...) asparagine" evidence="1">
    <location>
        <position position="765"/>
    </location>
</feature>
<feature type="glycosylation site" description="N-linked (GlcNAc...) asparagine" evidence="7">
    <location>
        <position position="845"/>
    </location>
</feature>
<feature type="disulfide bond" evidence="3">
    <location>
        <begin position="58"/>
        <end position="122"/>
    </location>
</feature>
<feature type="disulfide bond" evidence="3">
    <location>
        <begin position="85"/>
        <end position="92"/>
    </location>
</feature>
<feature type="disulfide bond" evidence="3">
    <location>
        <begin position="121"/>
        <end position="130"/>
    </location>
</feature>
<feature type="sequence variant" id="VAR_019801" description="In dbSNP:rs3750823." evidence="5">
    <original>G</original>
    <variation>S</variation>
    <location>
        <position position="49"/>
    </location>
</feature>
<feature type="sequence variant" id="VAR_036362" description="In a colorectal cancer sample; somatic mutation; dbSNP:rs748531029." evidence="8">
    <original>V</original>
    <variation>M</variation>
    <location>
        <position position="448"/>
    </location>
</feature>
<feature type="sequence variant" id="VAR_019802" description="In dbSNP:rs4934281." evidence="5 6">
    <original>H</original>
    <variation>D</variation>
    <location>
        <position position="731"/>
    </location>
</feature>
<feature type="sequence variant" id="VAR_053076" description="In dbSNP:rs36073867.">
    <original>S</original>
    <variation>R</variation>
    <location>
        <position position="831"/>
    </location>
</feature>
<feature type="sequence variant" id="VAR_053077" description="In dbSNP:rs34587013.">
    <original>V</original>
    <variation>L</variation>
    <location>
        <position position="910"/>
    </location>
</feature>
<feature type="sequence conflict" description="In Ref. 4; AAH64415." evidence="14" ref="4">
    <original>R</original>
    <variation>H</variation>
    <location>
        <position position="270"/>
    </location>
</feature>
<protein>
    <recommendedName>
        <fullName>Multimerin-2</fullName>
    </recommendedName>
    <alternativeName>
        <fullName>EMILIN-3</fullName>
    </alternativeName>
    <alternativeName>
        <fullName>Elastin microfibril interface located protein 3</fullName>
        <shortName>Elastin microfibril interfacer 3</shortName>
    </alternativeName>
    <alternativeName>
        <fullName>EndoGlyx-1 p125/p140 subunit</fullName>
    </alternativeName>
</protein>
<keyword id="KW-0037">Angiogenesis</keyword>
<keyword id="KW-0175">Coiled coil</keyword>
<keyword id="KW-1015">Disulfide bond</keyword>
<keyword id="KW-0272">Extracellular matrix</keyword>
<keyword id="KW-0325">Glycoprotein</keyword>
<keyword id="KW-1267">Proteomics identification</keyword>
<keyword id="KW-1185">Reference proteome</keyword>
<keyword id="KW-0964">Secreted</keyword>
<keyword id="KW-0732">Signal</keyword>
<evidence type="ECO:0000255" key="1"/>
<evidence type="ECO:0000255" key="2">
    <source>
        <dbReference type="PROSITE-ProRule" id="PRU00368"/>
    </source>
</evidence>
<evidence type="ECO:0000255" key="3">
    <source>
        <dbReference type="PROSITE-ProRule" id="PRU00384"/>
    </source>
</evidence>
<evidence type="ECO:0000256" key="4">
    <source>
        <dbReference type="SAM" id="MobiDB-lite"/>
    </source>
</evidence>
<evidence type="ECO:0000269" key="5">
    <source>
    </source>
</evidence>
<evidence type="ECO:0000269" key="6">
    <source>
    </source>
</evidence>
<evidence type="ECO:0000269" key="7">
    <source>
    </source>
</evidence>
<evidence type="ECO:0000269" key="8">
    <source>
    </source>
</evidence>
<evidence type="ECO:0000269" key="9">
    <source>
    </source>
</evidence>
<evidence type="ECO:0000269" key="10">
    <source>
    </source>
</evidence>
<evidence type="ECO:0000269" key="11">
    <source>
    </source>
</evidence>
<evidence type="ECO:0000269" key="12">
    <source>
    </source>
</evidence>
<evidence type="ECO:0000269" key="13">
    <source>
    </source>
</evidence>
<evidence type="ECO:0000305" key="14"/>
<reference key="1">
    <citation type="journal article" date="2001" name="J. Biol. Chem.">
        <title>Molecular cloning and characterization of EndoGlyx-1, an EMILIN-like multisubunit glycoprotein of vascular endothelium.</title>
        <authorList>
            <person name="Christian S."/>
            <person name="Ahorn H."/>
            <person name="Novatchkova M."/>
            <person name="Garin-Chesa P."/>
            <person name="Park J.E."/>
            <person name="Weber G."/>
            <person name="Eisenhaber F."/>
            <person name="Rettig W.J."/>
            <person name="Lenter M.C."/>
        </authorList>
    </citation>
    <scope>NUCLEOTIDE SEQUENCE [MRNA]</scope>
    <scope>SUBUNIT</scope>
    <scope>SUBCELLULAR LOCATION</scope>
    <scope>TISSUE SPECIFICITY</scope>
    <scope>IDENTIFICATION BY MASS SPECTROMETRY</scope>
    <scope>VARIANTS SER-49 AND ASP-731</scope>
</reference>
<reference key="2">
    <citation type="journal article" date="2004" name="Nat. Genet.">
        <title>Complete sequencing and characterization of 21,243 full-length human cDNAs.</title>
        <authorList>
            <person name="Ota T."/>
            <person name="Suzuki Y."/>
            <person name="Nishikawa T."/>
            <person name="Otsuki T."/>
            <person name="Sugiyama T."/>
            <person name="Irie R."/>
            <person name="Wakamatsu A."/>
            <person name="Hayashi K."/>
            <person name="Sato H."/>
            <person name="Nagai K."/>
            <person name="Kimura K."/>
            <person name="Makita H."/>
            <person name="Sekine M."/>
            <person name="Obayashi M."/>
            <person name="Nishi T."/>
            <person name="Shibahara T."/>
            <person name="Tanaka T."/>
            <person name="Ishii S."/>
            <person name="Yamamoto J."/>
            <person name="Saito K."/>
            <person name="Kawai Y."/>
            <person name="Isono Y."/>
            <person name="Nakamura Y."/>
            <person name="Nagahari K."/>
            <person name="Murakami K."/>
            <person name="Yasuda T."/>
            <person name="Iwayanagi T."/>
            <person name="Wagatsuma M."/>
            <person name="Shiratori A."/>
            <person name="Sudo H."/>
            <person name="Hosoiri T."/>
            <person name="Kaku Y."/>
            <person name="Kodaira H."/>
            <person name="Kondo H."/>
            <person name="Sugawara M."/>
            <person name="Takahashi M."/>
            <person name="Kanda K."/>
            <person name="Yokoi T."/>
            <person name="Furuya T."/>
            <person name="Kikkawa E."/>
            <person name="Omura Y."/>
            <person name="Abe K."/>
            <person name="Kamihara K."/>
            <person name="Katsuta N."/>
            <person name="Sato K."/>
            <person name="Tanikawa M."/>
            <person name="Yamazaki M."/>
            <person name="Ninomiya K."/>
            <person name="Ishibashi T."/>
            <person name="Yamashita H."/>
            <person name="Murakawa K."/>
            <person name="Fujimori K."/>
            <person name="Tanai H."/>
            <person name="Kimata M."/>
            <person name="Watanabe M."/>
            <person name="Hiraoka S."/>
            <person name="Chiba Y."/>
            <person name="Ishida S."/>
            <person name="Ono Y."/>
            <person name="Takiguchi S."/>
            <person name="Watanabe S."/>
            <person name="Yosida M."/>
            <person name="Hotuta T."/>
            <person name="Kusano J."/>
            <person name="Kanehori K."/>
            <person name="Takahashi-Fujii A."/>
            <person name="Hara H."/>
            <person name="Tanase T.-O."/>
            <person name="Nomura Y."/>
            <person name="Togiya S."/>
            <person name="Komai F."/>
            <person name="Hara R."/>
            <person name="Takeuchi K."/>
            <person name="Arita M."/>
            <person name="Imose N."/>
            <person name="Musashino K."/>
            <person name="Yuuki H."/>
            <person name="Oshima A."/>
            <person name="Sasaki N."/>
            <person name="Aotsuka S."/>
            <person name="Yoshikawa Y."/>
            <person name="Matsunawa H."/>
            <person name="Ichihara T."/>
            <person name="Shiohata N."/>
            <person name="Sano S."/>
            <person name="Moriya S."/>
            <person name="Momiyama H."/>
            <person name="Satoh N."/>
            <person name="Takami S."/>
            <person name="Terashima Y."/>
            <person name="Suzuki O."/>
            <person name="Nakagawa S."/>
            <person name="Senoh A."/>
            <person name="Mizoguchi H."/>
            <person name="Goto Y."/>
            <person name="Shimizu F."/>
            <person name="Wakebe H."/>
            <person name="Hishigaki H."/>
            <person name="Watanabe T."/>
            <person name="Sugiyama A."/>
            <person name="Takemoto M."/>
            <person name="Kawakami B."/>
            <person name="Yamazaki M."/>
            <person name="Watanabe K."/>
            <person name="Kumagai A."/>
            <person name="Itakura S."/>
            <person name="Fukuzumi Y."/>
            <person name="Fujimori Y."/>
            <person name="Komiyama M."/>
            <person name="Tashiro H."/>
            <person name="Tanigami A."/>
            <person name="Fujiwara T."/>
            <person name="Ono T."/>
            <person name="Yamada K."/>
            <person name="Fujii Y."/>
            <person name="Ozaki K."/>
            <person name="Hirao M."/>
            <person name="Ohmori Y."/>
            <person name="Kawabata A."/>
            <person name="Hikiji T."/>
            <person name="Kobatake N."/>
            <person name="Inagaki H."/>
            <person name="Ikema Y."/>
            <person name="Okamoto S."/>
            <person name="Okitani R."/>
            <person name="Kawakami T."/>
            <person name="Noguchi S."/>
            <person name="Itoh T."/>
            <person name="Shigeta K."/>
            <person name="Senba T."/>
            <person name="Matsumura K."/>
            <person name="Nakajima Y."/>
            <person name="Mizuno T."/>
            <person name="Morinaga M."/>
            <person name="Sasaki M."/>
            <person name="Togashi T."/>
            <person name="Oyama M."/>
            <person name="Hata H."/>
            <person name="Watanabe M."/>
            <person name="Komatsu T."/>
            <person name="Mizushima-Sugano J."/>
            <person name="Satoh T."/>
            <person name="Shirai Y."/>
            <person name="Takahashi Y."/>
            <person name="Nakagawa K."/>
            <person name="Okumura K."/>
            <person name="Nagase T."/>
            <person name="Nomura N."/>
            <person name="Kikuchi H."/>
            <person name="Masuho Y."/>
            <person name="Yamashita R."/>
            <person name="Nakai K."/>
            <person name="Yada T."/>
            <person name="Nakamura Y."/>
            <person name="Ohara O."/>
            <person name="Isogai T."/>
            <person name="Sugano S."/>
        </authorList>
    </citation>
    <scope>NUCLEOTIDE SEQUENCE [LARGE SCALE MRNA]</scope>
    <source>
        <tissue>Placenta</tissue>
    </source>
</reference>
<reference key="3">
    <citation type="journal article" date="2004" name="Nature">
        <title>The DNA sequence and comparative analysis of human chromosome 10.</title>
        <authorList>
            <person name="Deloukas P."/>
            <person name="Earthrowl M.E."/>
            <person name="Grafham D.V."/>
            <person name="Rubenfield M."/>
            <person name="French L."/>
            <person name="Steward C.A."/>
            <person name="Sims S.K."/>
            <person name="Jones M.C."/>
            <person name="Searle S."/>
            <person name="Scott C."/>
            <person name="Howe K."/>
            <person name="Hunt S.E."/>
            <person name="Andrews T.D."/>
            <person name="Gilbert J.G.R."/>
            <person name="Swarbreck D."/>
            <person name="Ashurst J.L."/>
            <person name="Taylor A."/>
            <person name="Battles J."/>
            <person name="Bird C.P."/>
            <person name="Ainscough R."/>
            <person name="Almeida J.P."/>
            <person name="Ashwell R.I.S."/>
            <person name="Ambrose K.D."/>
            <person name="Babbage A.K."/>
            <person name="Bagguley C.L."/>
            <person name="Bailey J."/>
            <person name="Banerjee R."/>
            <person name="Bates K."/>
            <person name="Beasley H."/>
            <person name="Bray-Allen S."/>
            <person name="Brown A.J."/>
            <person name="Brown J.Y."/>
            <person name="Burford D.C."/>
            <person name="Burrill W."/>
            <person name="Burton J."/>
            <person name="Cahill P."/>
            <person name="Camire D."/>
            <person name="Carter N.P."/>
            <person name="Chapman J.C."/>
            <person name="Clark S.Y."/>
            <person name="Clarke G."/>
            <person name="Clee C.M."/>
            <person name="Clegg S."/>
            <person name="Corby N."/>
            <person name="Coulson A."/>
            <person name="Dhami P."/>
            <person name="Dutta I."/>
            <person name="Dunn M."/>
            <person name="Faulkner L."/>
            <person name="Frankish A."/>
            <person name="Frankland J.A."/>
            <person name="Garner P."/>
            <person name="Garnett J."/>
            <person name="Gribble S."/>
            <person name="Griffiths C."/>
            <person name="Grocock R."/>
            <person name="Gustafson E."/>
            <person name="Hammond S."/>
            <person name="Harley J.L."/>
            <person name="Hart E."/>
            <person name="Heath P.D."/>
            <person name="Ho T.P."/>
            <person name="Hopkins B."/>
            <person name="Horne J."/>
            <person name="Howden P.J."/>
            <person name="Huckle E."/>
            <person name="Hynds C."/>
            <person name="Johnson C."/>
            <person name="Johnson D."/>
            <person name="Kana A."/>
            <person name="Kay M."/>
            <person name="Kimberley A.M."/>
            <person name="Kershaw J.K."/>
            <person name="Kokkinaki M."/>
            <person name="Laird G.K."/>
            <person name="Lawlor S."/>
            <person name="Lee H.M."/>
            <person name="Leongamornlert D.A."/>
            <person name="Laird G."/>
            <person name="Lloyd C."/>
            <person name="Lloyd D.M."/>
            <person name="Loveland J."/>
            <person name="Lovell J."/>
            <person name="McLaren S."/>
            <person name="McLay K.E."/>
            <person name="McMurray A."/>
            <person name="Mashreghi-Mohammadi M."/>
            <person name="Matthews L."/>
            <person name="Milne S."/>
            <person name="Nickerson T."/>
            <person name="Nguyen M."/>
            <person name="Overton-Larty E."/>
            <person name="Palmer S.A."/>
            <person name="Pearce A.V."/>
            <person name="Peck A.I."/>
            <person name="Pelan S."/>
            <person name="Phillimore B."/>
            <person name="Porter K."/>
            <person name="Rice C.M."/>
            <person name="Rogosin A."/>
            <person name="Ross M.T."/>
            <person name="Sarafidou T."/>
            <person name="Sehra H.K."/>
            <person name="Shownkeen R."/>
            <person name="Skuce C.D."/>
            <person name="Smith M."/>
            <person name="Standring L."/>
            <person name="Sycamore N."/>
            <person name="Tester J."/>
            <person name="Thorpe A."/>
            <person name="Torcasso W."/>
            <person name="Tracey A."/>
            <person name="Tromans A."/>
            <person name="Tsolas J."/>
            <person name="Wall M."/>
            <person name="Walsh J."/>
            <person name="Wang H."/>
            <person name="Weinstock K."/>
            <person name="West A.P."/>
            <person name="Willey D.L."/>
            <person name="Whitehead S.L."/>
            <person name="Wilming L."/>
            <person name="Wray P.W."/>
            <person name="Young L."/>
            <person name="Chen Y."/>
            <person name="Lovering R.C."/>
            <person name="Moschonas N.K."/>
            <person name="Siebert R."/>
            <person name="Fechtel K."/>
            <person name="Bentley D."/>
            <person name="Durbin R.M."/>
            <person name="Hubbard T."/>
            <person name="Doucette-Stamm L."/>
            <person name="Beck S."/>
            <person name="Smith D.R."/>
            <person name="Rogers J."/>
        </authorList>
    </citation>
    <scope>NUCLEOTIDE SEQUENCE [LARGE SCALE GENOMIC DNA]</scope>
</reference>
<reference key="4">
    <citation type="journal article" date="2004" name="Genome Res.">
        <title>The status, quality, and expansion of the NIH full-length cDNA project: the Mammalian Gene Collection (MGC).</title>
        <authorList>
            <consortium name="The MGC Project Team"/>
        </authorList>
    </citation>
    <scope>NUCLEOTIDE SEQUENCE [LARGE SCALE MRNA]</scope>
    <scope>VARIANT ASP-731</scope>
    <source>
        <tissue>Placenta</tissue>
    </source>
</reference>
<reference key="5">
    <citation type="journal article" date="2005" name="J. Proteome Res.">
        <title>Human plasma N-glycoproteome analysis by immunoaffinity subtraction, hydrazide chemistry, and mass spectrometry.</title>
        <authorList>
            <person name="Liu T."/>
            <person name="Qian W.-J."/>
            <person name="Gritsenko M.A."/>
            <person name="Camp D.G. II"/>
            <person name="Monroe M.E."/>
            <person name="Moore R.J."/>
            <person name="Smith R.D."/>
        </authorList>
    </citation>
    <scope>GLYCOSYLATION [LARGE SCALE ANALYSIS] AT ASN-845</scope>
    <source>
        <tissue>Plasma</tissue>
    </source>
</reference>
<reference key="6">
    <citation type="journal article" date="2012" name="Oncogene">
        <title>MULTIMERIN2 impairs tumor angiogenesis and growth by interfering with VEGF-A/VEGFR2 pathway.</title>
        <authorList>
            <person name="Lorenzon E."/>
            <person name="Colladel R."/>
            <person name="Andreuzzi E."/>
            <person name="Marastoni S."/>
            <person name="Todaro F."/>
            <person name="Schiappacassi M."/>
            <person name="Ligresti G."/>
            <person name="Colombatti A."/>
            <person name="Mongiat M."/>
        </authorList>
    </citation>
    <scope>FUNCTION</scope>
    <scope>INTERACTION WITH VEGFA</scope>
</reference>
<reference key="7">
    <citation type="journal article" date="2017" name="Matrix Biol.">
        <title>The angiostatic molecule Multimerin 2 is processed by MMP-9 to allow sprouting angiogenesis.</title>
        <authorList>
            <person name="Andreuzzi E."/>
            <person name="Colladel R."/>
            <person name="Pellicani R."/>
            <person name="Tarticchio G."/>
            <person name="Cannizzaro R."/>
            <person name="Spessotto P."/>
            <person name="Bussolati B."/>
            <person name="Brossa A."/>
            <person name="De Paoli P."/>
            <person name="Canzonieri V."/>
            <person name="Iozzo R.V."/>
            <person name="Colombatti A."/>
            <person name="Mongiat M."/>
        </authorList>
    </citation>
    <scope>FUNCTION</scope>
    <scope>CLEVEAGE BY MMP9</scope>
</reference>
<reference key="8">
    <citation type="journal article" date="2017" name="Matrix Biol.">
        <title>Dissecting the CD93-Multimerin 2 interaction involved in cell adhesion and migration of the activated endothelium.</title>
        <authorList>
            <person name="Galvagni F."/>
            <person name="Nardi F."/>
            <person name="Spiga O."/>
            <person name="Trezza A."/>
            <person name="Tarticchio G."/>
            <person name="Pellicani R."/>
            <person name="Andreuzzi E."/>
            <person name="Caldi E."/>
            <person name="Toti P."/>
            <person name="Tosi G.M."/>
            <person name="Santucci A."/>
            <person name="Iozzo R.V."/>
            <person name="Mongiat M."/>
            <person name="Orlandini M."/>
        </authorList>
    </citation>
    <scope>FUNCTION</scope>
    <scope>INTERACTION WITH CD93</scope>
</reference>
<reference key="9">
    <citation type="journal article" date="2017" name="Oncogene">
        <title>Multimerin-2 is a ligand for group 14 family C-type lectins CLEC14A, CD93 and CD248 spanning the endothelial pericyte interface.</title>
        <authorList>
            <person name="Khan K.A."/>
            <person name="Naylor A.J."/>
            <person name="Khan A."/>
            <person name="Noy P.J."/>
            <person name="Mambretti M."/>
            <person name="Lodhia P."/>
            <person name="Athwal J."/>
            <person name="Korzystka A."/>
            <person name="Buckley C.D."/>
            <person name="Willcox B.E."/>
            <person name="Mohammed F."/>
            <person name="Bicknell R."/>
        </authorList>
    </citation>
    <scope>FUNCTION</scope>
    <scope>INTERACTION WITH CD93 AND CD248</scope>
    <scope>MUTAGENESIS OF CYS-104 AND CYS-136</scope>
</reference>
<reference key="10">
    <citation type="journal article" date="2025" name="Nat. Chem. Biol.">
        <title>FUT10 and FUT11 are protein O-fucosyltransferases that modify protein EMI domains.</title>
        <authorList>
            <person name="Hao H."/>
            <person name="Yuan Y."/>
            <person name="Ito A."/>
            <person name="Eberand B.M."/>
            <person name="Tjondro H."/>
            <person name="Cielesh M."/>
            <person name="Norris N."/>
            <person name="Moreno C.L."/>
            <person name="Maxwell J.W.C."/>
            <person name="Neely G.G."/>
            <person name="Payne R.J."/>
            <person name="Kebede M.A."/>
            <person name="Urbauer R.J.B."/>
            <person name="Passam F.H."/>
            <person name="Larance M."/>
            <person name="Haltiwanger R.S."/>
        </authorList>
    </citation>
    <scope>GLYCOSYLATION AT SER-63; THR-67 AND THR-115</scope>
</reference>
<reference key="11">
    <citation type="journal article" date="2006" name="Science">
        <title>The consensus coding sequences of human breast and colorectal cancers.</title>
        <authorList>
            <person name="Sjoeblom T."/>
            <person name="Jones S."/>
            <person name="Wood L.D."/>
            <person name="Parsons D.W."/>
            <person name="Lin J."/>
            <person name="Barber T.D."/>
            <person name="Mandelker D."/>
            <person name="Leary R.J."/>
            <person name="Ptak J."/>
            <person name="Silliman N."/>
            <person name="Szabo S."/>
            <person name="Buckhaults P."/>
            <person name="Farrell C."/>
            <person name="Meeh P."/>
            <person name="Markowitz S.D."/>
            <person name="Willis J."/>
            <person name="Dawson D."/>
            <person name="Willson J.K.V."/>
            <person name="Gazdar A.F."/>
            <person name="Hartigan J."/>
            <person name="Wu L."/>
            <person name="Liu C."/>
            <person name="Parmigiani G."/>
            <person name="Park B.H."/>
            <person name="Bachman K.E."/>
            <person name="Papadopoulos N."/>
            <person name="Vogelstein B."/>
            <person name="Kinzler K.W."/>
            <person name="Velculescu V.E."/>
        </authorList>
    </citation>
    <scope>VARIANT [LARGE SCALE ANALYSIS] MET-448</scope>
</reference>
<sequence>MILSLLFSLGGPLGWGLLGAWAQASSTSLSDLQSSRTPGVWKAEAEDTGKDPVGRNWCPYPMSKLVTLLALCKTEKFLIHSQQPCPQGAPDCQKVKVMYRMAHKPVYQVKQKVLTSLAWRCCPGYTGPNCEHHDSMAIPEPADPGDSHQEPQDGPVSFKPGHLAAVINEVEVQQEQQEHLLGDLQNDVHRVADSLPGLWKALPGNLTAAVMEANQTGHEFPDRSLEQVLLPHVDTFLQVHFSPIWRSFNQSLHSLTQAIRNLSLDVEANRQAISRVQDSAVARADFQELGAKFEAKVQENTQRVGQLRQDVEDRLHAQHFTLHRSISELQADVDTKLKRLHKAQEAPGTNGSLVLATPGAGARPEPDSLQARLGQLQRNLSELHMTTARREEELQYTLEDMRATLTRHVDEIKELYSESDETFDQISKVERQVEELQVNHTALRELRVILMEKSLIMEENKEEVERQLLELNLTLQHLQGGHADLIKYVKDCNCQKLYLDLDVIREGQRDATRALEETQVSLDERRQLDGSSLQALQNAVDAVSLAVDAHKAEGERARAATSRLRSQVQALDDEVGALKAAAAEARHEVRQLHSAFAALLEDALRHEAVLAALFGEEVLEEMSEQTPGPLPLSYEQIRVALQDAASGLQEQALGWDELAARVTALEQASEPPRPAEHLEPSHDAGREEAATTALAGLARELQSLSNDVKNVGRCCEAEAGAGAASLNASLHGLHNALFATQRSLEQHQRLFHSLFGNFQGLMEANVSLDLGKLQTMLSRKGKKQQKDLEAPRKRDKKEAEPLVDIRVTGPVPGALGAALWEAGSPVAFYASFSEGTAALQTVKFNTTYINIGSSYFPEHGYFRAPERGVYLFAVSVEFGPGPGTGQLVFGGHHRTPVCTTGQGSGSTATVFAMAELQKGERVWFELTQGSITKRSLSGTAFGGFLMFKT</sequence>
<dbReference type="EMBL" id="AK023527">
    <property type="protein sequence ID" value="BAB14599.1"/>
    <property type="molecule type" value="mRNA"/>
</dbReference>
<dbReference type="EMBL" id="AC025268">
    <property type="status" value="NOT_ANNOTATED_CDS"/>
    <property type="molecule type" value="Genomic_DNA"/>
</dbReference>
<dbReference type="EMBL" id="BC064415">
    <property type="protein sequence ID" value="AAH64415.1"/>
    <property type="molecule type" value="mRNA"/>
</dbReference>
<dbReference type="EMBL" id="BC094744">
    <property type="protein sequence ID" value="AAH94744.1"/>
    <property type="molecule type" value="mRNA"/>
</dbReference>
<dbReference type="CCDS" id="CCDS7379.1"/>
<dbReference type="RefSeq" id="NP_079032.2">
    <property type="nucleotide sequence ID" value="NM_024756.3"/>
</dbReference>
<dbReference type="SMR" id="Q9H8L6"/>
<dbReference type="BioGRID" id="122907">
    <property type="interactions" value="7"/>
</dbReference>
<dbReference type="ComplexPortal" id="CPX-450">
    <property type="entry name" value="Multimerin-2 complex"/>
</dbReference>
<dbReference type="FunCoup" id="Q9H8L6">
    <property type="interactions" value="164"/>
</dbReference>
<dbReference type="IntAct" id="Q9H8L6">
    <property type="interactions" value="5"/>
</dbReference>
<dbReference type="STRING" id="9606.ENSP00000361097"/>
<dbReference type="GlyConnect" id="1524">
    <property type="glycosylation" value="16 N-Linked glycans (6 sites)"/>
</dbReference>
<dbReference type="GlyCosmos" id="Q9H8L6">
    <property type="glycosylation" value="17 sites, 17 glycans"/>
</dbReference>
<dbReference type="GlyGen" id="Q9H8L6">
    <property type="glycosylation" value="17 sites, 88 N-linked glycans (9 sites), 1 O-linked glycan (5 sites)"/>
</dbReference>
<dbReference type="iPTMnet" id="Q9H8L6"/>
<dbReference type="PhosphoSitePlus" id="Q9H8L6"/>
<dbReference type="BioMuta" id="MMRN2"/>
<dbReference type="DMDM" id="296437373"/>
<dbReference type="jPOST" id="Q9H8L6"/>
<dbReference type="MassIVE" id="Q9H8L6"/>
<dbReference type="PaxDb" id="9606-ENSP00000361097"/>
<dbReference type="PeptideAtlas" id="Q9H8L6"/>
<dbReference type="ProteomicsDB" id="81216"/>
<dbReference type="Antibodypedia" id="16004">
    <property type="antibodies" value="93 antibodies from 24 providers"/>
</dbReference>
<dbReference type="DNASU" id="79812"/>
<dbReference type="Ensembl" id="ENST00000372027.10">
    <property type="protein sequence ID" value="ENSP00000361097.4"/>
    <property type="gene ID" value="ENSG00000173269.14"/>
</dbReference>
<dbReference type="GeneID" id="79812"/>
<dbReference type="KEGG" id="hsa:79812"/>
<dbReference type="MANE-Select" id="ENST00000372027.10">
    <property type="protein sequence ID" value="ENSP00000361097.4"/>
    <property type="RefSeq nucleotide sequence ID" value="NM_024756.3"/>
    <property type="RefSeq protein sequence ID" value="NP_079032.2"/>
</dbReference>
<dbReference type="UCSC" id="uc001kea.4">
    <property type="organism name" value="human"/>
</dbReference>
<dbReference type="AGR" id="HGNC:19888"/>
<dbReference type="CTD" id="79812"/>
<dbReference type="DisGeNET" id="79812"/>
<dbReference type="GeneCards" id="MMRN2"/>
<dbReference type="HGNC" id="HGNC:19888">
    <property type="gene designation" value="MMRN2"/>
</dbReference>
<dbReference type="HPA" id="ENSG00000173269">
    <property type="expression patterns" value="Low tissue specificity"/>
</dbReference>
<dbReference type="MIM" id="608925">
    <property type="type" value="gene"/>
</dbReference>
<dbReference type="neXtProt" id="NX_Q9H8L6"/>
<dbReference type="OpenTargets" id="ENSG00000173269"/>
<dbReference type="PharmGKB" id="PA134991578"/>
<dbReference type="VEuPathDB" id="HostDB:ENSG00000173269"/>
<dbReference type="eggNOG" id="ENOG502QUTH">
    <property type="taxonomic scope" value="Eukaryota"/>
</dbReference>
<dbReference type="GeneTree" id="ENSGT01030000234633"/>
<dbReference type="HOGENOM" id="CLU_012255_1_0_1"/>
<dbReference type="InParanoid" id="Q9H8L6"/>
<dbReference type="OMA" id="EFSNHMS"/>
<dbReference type="OrthoDB" id="8963519at2759"/>
<dbReference type="PAN-GO" id="Q9H8L6">
    <property type="GO annotations" value="2 GO annotations based on evolutionary models"/>
</dbReference>
<dbReference type="PhylomeDB" id="Q9H8L6"/>
<dbReference type="TreeFam" id="TF336041"/>
<dbReference type="PathwayCommons" id="Q9H8L6"/>
<dbReference type="SignaLink" id="Q9H8L6"/>
<dbReference type="BioGRID-ORCS" id="79812">
    <property type="hits" value="9 hits in 1140 CRISPR screens"/>
</dbReference>
<dbReference type="CD-CODE" id="91857CE7">
    <property type="entry name" value="Nucleolus"/>
</dbReference>
<dbReference type="ChiTaRS" id="MMRN2">
    <property type="organism name" value="human"/>
</dbReference>
<dbReference type="GenomeRNAi" id="79812"/>
<dbReference type="Pharos" id="Q9H8L6">
    <property type="development level" value="Tbio"/>
</dbReference>
<dbReference type="PRO" id="PR:Q9H8L6"/>
<dbReference type="Proteomes" id="UP000005640">
    <property type="component" value="Chromosome 10"/>
</dbReference>
<dbReference type="RNAct" id="Q9H8L6">
    <property type="molecule type" value="protein"/>
</dbReference>
<dbReference type="Bgee" id="ENSG00000173269">
    <property type="expression patterns" value="Expressed in subcutaneous adipose tissue and 185 other cell types or tissues"/>
</dbReference>
<dbReference type="ExpressionAtlas" id="Q9H8L6">
    <property type="expression patterns" value="baseline and differential"/>
</dbReference>
<dbReference type="GO" id="GO:0005604">
    <property type="term" value="C:basement membrane"/>
    <property type="evidence" value="ECO:0007669"/>
    <property type="project" value="Ensembl"/>
</dbReference>
<dbReference type="GO" id="GO:0062023">
    <property type="term" value="C:collagen-containing extracellular matrix"/>
    <property type="evidence" value="ECO:0007005"/>
    <property type="project" value="BHF-UCL"/>
</dbReference>
<dbReference type="GO" id="GO:0070062">
    <property type="term" value="C:extracellular exosome"/>
    <property type="evidence" value="ECO:0007005"/>
    <property type="project" value="UniProtKB"/>
</dbReference>
<dbReference type="GO" id="GO:0005615">
    <property type="term" value="C:extracellular space"/>
    <property type="evidence" value="ECO:0000314"/>
    <property type="project" value="UniProtKB"/>
</dbReference>
<dbReference type="GO" id="GO:1990972">
    <property type="term" value="C:multimerin complex"/>
    <property type="evidence" value="ECO:0000250"/>
    <property type="project" value="ComplexPortal"/>
</dbReference>
<dbReference type="GO" id="GO:0048018">
    <property type="term" value="F:receptor ligand activity"/>
    <property type="evidence" value="ECO:0000314"/>
    <property type="project" value="UniProt"/>
</dbReference>
<dbReference type="GO" id="GO:0001525">
    <property type="term" value="P:angiogenesis"/>
    <property type="evidence" value="ECO:0000314"/>
    <property type="project" value="UniProt"/>
</dbReference>
<dbReference type="GO" id="GO:0007155">
    <property type="term" value="P:cell adhesion"/>
    <property type="evidence" value="ECO:0000303"/>
    <property type="project" value="ComplexPortal"/>
</dbReference>
<dbReference type="GO" id="GO:0002042">
    <property type="term" value="P:cell migration involved in sprouting angiogenesis"/>
    <property type="evidence" value="ECO:0007669"/>
    <property type="project" value="Ensembl"/>
</dbReference>
<dbReference type="GO" id="GO:1903588">
    <property type="term" value="P:negative regulation of blood vessel endothelial cell proliferation involved in sprouting angiogenesis"/>
    <property type="evidence" value="ECO:0000314"/>
    <property type="project" value="ComplexPortal"/>
</dbReference>
<dbReference type="GO" id="GO:0030336">
    <property type="term" value="P:negative regulation of cell migration"/>
    <property type="evidence" value="ECO:0000314"/>
    <property type="project" value="ComplexPortal"/>
</dbReference>
<dbReference type="GO" id="GO:0090051">
    <property type="term" value="P:negative regulation of cell migration involved in sprouting angiogenesis"/>
    <property type="evidence" value="ECO:0000314"/>
    <property type="project" value="UniProtKB"/>
</dbReference>
<dbReference type="GO" id="GO:0008285">
    <property type="term" value="P:negative regulation of cell population proliferation"/>
    <property type="evidence" value="ECO:0000314"/>
    <property type="project" value="ComplexPortal"/>
</dbReference>
<dbReference type="GO" id="GO:0030948">
    <property type="term" value="P:negative regulation of vascular endothelial growth factor receptor signaling pathway"/>
    <property type="evidence" value="ECO:0000314"/>
    <property type="project" value="UniProtKB"/>
</dbReference>
<dbReference type="GO" id="GO:1900426">
    <property type="term" value="P:positive regulation of defense response to bacterium"/>
    <property type="evidence" value="ECO:0000266"/>
    <property type="project" value="ComplexPortal"/>
</dbReference>
<dbReference type="GO" id="GO:1905278">
    <property type="term" value="P:positive regulation of epithelial tube formation"/>
    <property type="evidence" value="ECO:0000314"/>
    <property type="project" value="ComplexPortal"/>
</dbReference>
<dbReference type="GO" id="GO:1905332">
    <property type="term" value="P:positive regulation of morphogenesis of an epithelium"/>
    <property type="evidence" value="ECO:0000314"/>
    <property type="project" value="ComplexPortal"/>
</dbReference>
<dbReference type="FunFam" id="2.60.120.40:FF:000028">
    <property type="entry name" value="Multimerin 2"/>
    <property type="match status" value="1"/>
</dbReference>
<dbReference type="Gene3D" id="2.60.120.40">
    <property type="match status" value="1"/>
</dbReference>
<dbReference type="InterPro" id="IPR001073">
    <property type="entry name" value="C1q_dom"/>
</dbReference>
<dbReference type="InterPro" id="IPR050392">
    <property type="entry name" value="Collagen/C1q_domain"/>
</dbReference>
<dbReference type="InterPro" id="IPR011489">
    <property type="entry name" value="EMI_domain"/>
</dbReference>
<dbReference type="InterPro" id="IPR008983">
    <property type="entry name" value="Tumour_necrosis_fac-like_dom"/>
</dbReference>
<dbReference type="PANTHER" id="PTHR15427">
    <property type="entry name" value="EMILIN ELASTIN MICROFIBRIL INTERFACE-LOCATED PROTEIN ELASTIN MICROFIBRIL INTERFACER"/>
    <property type="match status" value="1"/>
</dbReference>
<dbReference type="PANTHER" id="PTHR15427:SF6">
    <property type="entry name" value="MULTIMERIN-2"/>
    <property type="match status" value="1"/>
</dbReference>
<dbReference type="Pfam" id="PF00386">
    <property type="entry name" value="C1q"/>
    <property type="match status" value="1"/>
</dbReference>
<dbReference type="Pfam" id="PF07546">
    <property type="entry name" value="EMI"/>
    <property type="match status" value="1"/>
</dbReference>
<dbReference type="PRINTS" id="PR00007">
    <property type="entry name" value="COMPLEMNTC1Q"/>
</dbReference>
<dbReference type="SMART" id="SM00110">
    <property type="entry name" value="C1Q"/>
    <property type="match status" value="1"/>
</dbReference>
<dbReference type="SUPFAM" id="SSF49842">
    <property type="entry name" value="TNF-like"/>
    <property type="match status" value="1"/>
</dbReference>
<dbReference type="PROSITE" id="PS50871">
    <property type="entry name" value="C1Q"/>
    <property type="match status" value="1"/>
</dbReference>
<dbReference type="PROSITE" id="PS51041">
    <property type="entry name" value="EMI"/>
    <property type="match status" value="1"/>
</dbReference>
<accession>Q9H8L6</accession>
<accession>Q504V7</accession>
<accession>Q6P2N2</accession>
<name>MMRN2_HUMAN</name>
<gene>
    <name type="primary">MMRN2</name>
    <name type="synonym">EMILIN3</name>
</gene>
<organism>
    <name type="scientific">Homo sapiens</name>
    <name type="common">Human</name>
    <dbReference type="NCBI Taxonomy" id="9606"/>
    <lineage>
        <taxon>Eukaryota</taxon>
        <taxon>Metazoa</taxon>
        <taxon>Chordata</taxon>
        <taxon>Craniata</taxon>
        <taxon>Vertebrata</taxon>
        <taxon>Euteleostomi</taxon>
        <taxon>Mammalia</taxon>
        <taxon>Eutheria</taxon>
        <taxon>Euarchontoglires</taxon>
        <taxon>Primates</taxon>
        <taxon>Haplorrhini</taxon>
        <taxon>Catarrhini</taxon>
        <taxon>Hominidae</taxon>
        <taxon>Homo</taxon>
    </lineage>
</organism>
<proteinExistence type="evidence at protein level"/>